<protein>
    <recommendedName>
        <fullName evidence="1">Nucleotide-binding protein VSAL_I0495</fullName>
    </recommendedName>
</protein>
<proteinExistence type="inferred from homology"/>
<dbReference type="EMBL" id="FM178379">
    <property type="protein sequence ID" value="CAQ78180.1"/>
    <property type="molecule type" value="Genomic_DNA"/>
</dbReference>
<dbReference type="SMR" id="B6EM99"/>
<dbReference type="KEGG" id="vsa:VSAL_I0495"/>
<dbReference type="eggNOG" id="COG1660">
    <property type="taxonomic scope" value="Bacteria"/>
</dbReference>
<dbReference type="HOGENOM" id="CLU_059558_0_0_6"/>
<dbReference type="Proteomes" id="UP000001730">
    <property type="component" value="Chromosome 1"/>
</dbReference>
<dbReference type="GO" id="GO:0005524">
    <property type="term" value="F:ATP binding"/>
    <property type="evidence" value="ECO:0007669"/>
    <property type="project" value="UniProtKB-UniRule"/>
</dbReference>
<dbReference type="GO" id="GO:0005525">
    <property type="term" value="F:GTP binding"/>
    <property type="evidence" value="ECO:0007669"/>
    <property type="project" value="UniProtKB-UniRule"/>
</dbReference>
<dbReference type="Gene3D" id="3.40.50.300">
    <property type="entry name" value="P-loop containing nucleotide triphosphate hydrolases"/>
    <property type="match status" value="1"/>
</dbReference>
<dbReference type="HAMAP" id="MF_00636">
    <property type="entry name" value="RapZ_like"/>
    <property type="match status" value="1"/>
</dbReference>
<dbReference type="InterPro" id="IPR027417">
    <property type="entry name" value="P-loop_NTPase"/>
</dbReference>
<dbReference type="InterPro" id="IPR005337">
    <property type="entry name" value="RapZ-like"/>
</dbReference>
<dbReference type="InterPro" id="IPR053930">
    <property type="entry name" value="RapZ-like_N"/>
</dbReference>
<dbReference type="InterPro" id="IPR053931">
    <property type="entry name" value="RapZ_C"/>
</dbReference>
<dbReference type="NCBIfam" id="NF003828">
    <property type="entry name" value="PRK05416.1"/>
    <property type="match status" value="1"/>
</dbReference>
<dbReference type="PANTHER" id="PTHR30448">
    <property type="entry name" value="RNASE ADAPTER PROTEIN RAPZ"/>
    <property type="match status" value="1"/>
</dbReference>
<dbReference type="PANTHER" id="PTHR30448:SF0">
    <property type="entry name" value="RNASE ADAPTER PROTEIN RAPZ"/>
    <property type="match status" value="1"/>
</dbReference>
<dbReference type="Pfam" id="PF22740">
    <property type="entry name" value="PapZ_C"/>
    <property type="match status" value="1"/>
</dbReference>
<dbReference type="Pfam" id="PF03668">
    <property type="entry name" value="RapZ-like_N"/>
    <property type="match status" value="1"/>
</dbReference>
<dbReference type="PIRSF" id="PIRSF005052">
    <property type="entry name" value="P-loopkin"/>
    <property type="match status" value="1"/>
</dbReference>
<dbReference type="SUPFAM" id="SSF52540">
    <property type="entry name" value="P-loop containing nucleoside triphosphate hydrolases"/>
    <property type="match status" value="1"/>
</dbReference>
<evidence type="ECO:0000255" key="1">
    <source>
        <dbReference type="HAMAP-Rule" id="MF_00636"/>
    </source>
</evidence>
<name>Y495_ALISL</name>
<reference key="1">
    <citation type="journal article" date="2008" name="BMC Genomics">
        <title>The genome sequence of the fish pathogen Aliivibrio salmonicida strain LFI1238 shows extensive evidence of gene decay.</title>
        <authorList>
            <person name="Hjerde E."/>
            <person name="Lorentzen M.S."/>
            <person name="Holden M.T."/>
            <person name="Seeger K."/>
            <person name="Paulsen S."/>
            <person name="Bason N."/>
            <person name="Churcher C."/>
            <person name="Harris D."/>
            <person name="Norbertczak H."/>
            <person name="Quail M.A."/>
            <person name="Sanders S."/>
            <person name="Thurston S."/>
            <person name="Parkhill J."/>
            <person name="Willassen N.P."/>
            <person name="Thomson N.R."/>
        </authorList>
    </citation>
    <scope>NUCLEOTIDE SEQUENCE [LARGE SCALE GENOMIC DNA]</scope>
    <source>
        <strain>LFI1238</strain>
    </source>
</reference>
<keyword id="KW-0067">ATP-binding</keyword>
<keyword id="KW-0342">GTP-binding</keyword>
<keyword id="KW-0547">Nucleotide-binding</keyword>
<gene>
    <name type="ordered locus">VSAL_I0495</name>
</gene>
<accession>B6EM99</accession>
<organism>
    <name type="scientific">Aliivibrio salmonicida (strain LFI1238)</name>
    <name type="common">Vibrio salmonicida (strain LFI1238)</name>
    <dbReference type="NCBI Taxonomy" id="316275"/>
    <lineage>
        <taxon>Bacteria</taxon>
        <taxon>Pseudomonadati</taxon>
        <taxon>Pseudomonadota</taxon>
        <taxon>Gammaproteobacteria</taxon>
        <taxon>Vibrionales</taxon>
        <taxon>Vibrionaceae</taxon>
        <taxon>Aliivibrio</taxon>
    </lineage>
</organism>
<comment type="function">
    <text evidence="1">Displays ATPase and GTPase activities.</text>
</comment>
<comment type="similarity">
    <text evidence="1">Belongs to the RapZ-like family.</text>
</comment>
<sequence length="284" mass="32380">MKLMVVSGNSGAGKSVALRVLEDLGYYCVDNLPVDLLAQFVESIQHSSQNVAVSVDIRNLPKDPSLLKNTLTELKKSHDVTVIFLDAEDKELIKRYSETRRLHPLSLIGEQCSLEQAVELEKSILCHFKEDADLVLDTTSKSIHDLSETLRSRILGRESKELVMVFESFGFKHGLPTDADYVFDVRFLPNPHWEPTLRPMTGLDKPVADYLEKHAEVIQLKEQIQHFLMTWLPALEKNNRSYLTVAIGCTGGQHRSVYITQQLGEYFKQQGQQVQIRHKTLERH</sequence>
<feature type="chain" id="PRO_1000130727" description="Nucleotide-binding protein VSAL_I0495">
    <location>
        <begin position="1"/>
        <end position="284"/>
    </location>
</feature>
<feature type="binding site" evidence="1">
    <location>
        <begin position="8"/>
        <end position="15"/>
    </location>
    <ligand>
        <name>ATP</name>
        <dbReference type="ChEBI" id="CHEBI:30616"/>
    </ligand>
</feature>
<feature type="binding site" evidence="1">
    <location>
        <begin position="56"/>
        <end position="59"/>
    </location>
    <ligand>
        <name>GTP</name>
        <dbReference type="ChEBI" id="CHEBI:37565"/>
    </ligand>
</feature>